<name>ACDH2_AZOVD</name>
<keyword id="KW-0058">Aromatic hydrocarbons catabolism</keyword>
<keyword id="KW-0520">NAD</keyword>
<keyword id="KW-0560">Oxidoreductase</keyword>
<feature type="chain" id="PRO_0000387620" description="Acetaldehyde dehydrogenase 2">
    <location>
        <begin position="1"/>
        <end position="311"/>
    </location>
</feature>
<feature type="active site" description="Acyl-thioester intermediate" evidence="1">
    <location>
        <position position="131"/>
    </location>
</feature>
<feature type="binding site" evidence="1">
    <location>
        <begin position="11"/>
        <end position="14"/>
    </location>
    <ligand>
        <name>NAD(+)</name>
        <dbReference type="ChEBI" id="CHEBI:57540"/>
    </ligand>
</feature>
<feature type="binding site" evidence="1">
    <location>
        <begin position="162"/>
        <end position="170"/>
    </location>
    <ligand>
        <name>NAD(+)</name>
        <dbReference type="ChEBI" id="CHEBI:57540"/>
    </ligand>
</feature>
<feature type="binding site" evidence="1">
    <location>
        <position position="289"/>
    </location>
    <ligand>
        <name>NAD(+)</name>
        <dbReference type="ChEBI" id="CHEBI:57540"/>
    </ligand>
</feature>
<proteinExistence type="inferred from homology"/>
<evidence type="ECO:0000255" key="1">
    <source>
        <dbReference type="HAMAP-Rule" id="MF_01657"/>
    </source>
</evidence>
<dbReference type="EC" id="1.2.1.10" evidence="1"/>
<dbReference type="EMBL" id="CP001157">
    <property type="protein sequence ID" value="ACO77727.1"/>
    <property type="molecule type" value="Genomic_DNA"/>
</dbReference>
<dbReference type="RefSeq" id="WP_012700143.1">
    <property type="nucleotide sequence ID" value="NC_012560.1"/>
</dbReference>
<dbReference type="SMR" id="C1DRI9"/>
<dbReference type="STRING" id="322710.Avin_15120"/>
<dbReference type="EnsemblBacteria" id="ACO77727">
    <property type="protein sequence ID" value="ACO77727"/>
    <property type="gene ID" value="Avin_15120"/>
</dbReference>
<dbReference type="GeneID" id="88184806"/>
<dbReference type="KEGG" id="avn:Avin_15120"/>
<dbReference type="eggNOG" id="COG4569">
    <property type="taxonomic scope" value="Bacteria"/>
</dbReference>
<dbReference type="HOGENOM" id="CLU_062208_0_0_6"/>
<dbReference type="OrthoDB" id="9786743at2"/>
<dbReference type="Proteomes" id="UP000002424">
    <property type="component" value="Chromosome"/>
</dbReference>
<dbReference type="GO" id="GO:0008774">
    <property type="term" value="F:acetaldehyde dehydrogenase (acetylating) activity"/>
    <property type="evidence" value="ECO:0007669"/>
    <property type="project" value="UniProtKB-UniRule"/>
</dbReference>
<dbReference type="GO" id="GO:0051287">
    <property type="term" value="F:NAD binding"/>
    <property type="evidence" value="ECO:0007669"/>
    <property type="project" value="UniProtKB-UniRule"/>
</dbReference>
<dbReference type="GO" id="GO:0009056">
    <property type="term" value="P:catabolic process"/>
    <property type="evidence" value="ECO:0007669"/>
    <property type="project" value="UniProtKB-KW"/>
</dbReference>
<dbReference type="CDD" id="cd23933">
    <property type="entry name" value="ALDH_C"/>
    <property type="match status" value="1"/>
</dbReference>
<dbReference type="Gene3D" id="3.30.360.10">
    <property type="entry name" value="Dihydrodipicolinate Reductase, domain 2"/>
    <property type="match status" value="1"/>
</dbReference>
<dbReference type="Gene3D" id="3.40.50.720">
    <property type="entry name" value="NAD(P)-binding Rossmann-like Domain"/>
    <property type="match status" value="1"/>
</dbReference>
<dbReference type="HAMAP" id="MF_01657">
    <property type="entry name" value="Ac_ald_DH_ac"/>
    <property type="match status" value="1"/>
</dbReference>
<dbReference type="InterPro" id="IPR003361">
    <property type="entry name" value="Acetaldehyde_dehydrogenase"/>
</dbReference>
<dbReference type="InterPro" id="IPR015426">
    <property type="entry name" value="Acetylaldehyde_DH_C"/>
</dbReference>
<dbReference type="InterPro" id="IPR036291">
    <property type="entry name" value="NAD(P)-bd_dom_sf"/>
</dbReference>
<dbReference type="InterPro" id="IPR000534">
    <property type="entry name" value="Semialdehyde_DH_NAD-bd"/>
</dbReference>
<dbReference type="NCBIfam" id="TIGR03215">
    <property type="entry name" value="ac_ald_DH_ac"/>
    <property type="match status" value="1"/>
</dbReference>
<dbReference type="NCBIfam" id="NF006157">
    <property type="entry name" value="PRK08300.1"/>
    <property type="match status" value="1"/>
</dbReference>
<dbReference type="Pfam" id="PF09290">
    <property type="entry name" value="AcetDehyd-dimer"/>
    <property type="match status" value="1"/>
</dbReference>
<dbReference type="Pfam" id="PF01118">
    <property type="entry name" value="Semialdhyde_dh"/>
    <property type="match status" value="1"/>
</dbReference>
<dbReference type="PIRSF" id="PIRSF015689">
    <property type="entry name" value="Actaldh_dh_actl"/>
    <property type="match status" value="1"/>
</dbReference>
<dbReference type="SMART" id="SM00859">
    <property type="entry name" value="Semialdhyde_dh"/>
    <property type="match status" value="1"/>
</dbReference>
<dbReference type="SUPFAM" id="SSF55347">
    <property type="entry name" value="Glyceraldehyde-3-phosphate dehydrogenase-like, C-terminal domain"/>
    <property type="match status" value="1"/>
</dbReference>
<dbReference type="SUPFAM" id="SSF51735">
    <property type="entry name" value="NAD(P)-binding Rossmann-fold domains"/>
    <property type="match status" value="1"/>
</dbReference>
<gene>
    <name type="primary">mhpF</name>
    <name type="ordered locus">Avin_15120</name>
</gene>
<protein>
    <recommendedName>
        <fullName evidence="1">Acetaldehyde dehydrogenase 2</fullName>
        <ecNumber evidence="1">1.2.1.10</ecNumber>
    </recommendedName>
    <alternativeName>
        <fullName evidence="1">Acetaldehyde dehydrogenase [acetylating] 2</fullName>
    </alternativeName>
</protein>
<sequence>MKKLKVAIVGSGNIGTDLMIKILRHGQHLEMGALVGIDPDSDGLARAARLGVATTAEGVEGLARLPGFGEIDFVFDATSAAAHVKNDPFLRGLRPGLRLIDLTPAAVGPYCVPVVNLEQNLREPNVNMVTCGGQATIPMVAAVSRVARVHYAEIVASIASRSAGPGTRANIDEFTETTSKAIEAIGGARKGKAIIVLNPAEPPLIMRDTVYVLSAPADQARVEASLAEMAQAVQGYVPGYRLKQRVQFDEIPDAAPLNIPGLGRLSGLKTSVFLEVEGAAHYLPAYAGNLDIMTSAALATAERMAQSMLNA</sequence>
<organism>
    <name type="scientific">Azotobacter vinelandii (strain DJ / ATCC BAA-1303)</name>
    <dbReference type="NCBI Taxonomy" id="322710"/>
    <lineage>
        <taxon>Bacteria</taxon>
        <taxon>Pseudomonadati</taxon>
        <taxon>Pseudomonadota</taxon>
        <taxon>Gammaproteobacteria</taxon>
        <taxon>Pseudomonadales</taxon>
        <taxon>Pseudomonadaceae</taxon>
        <taxon>Azotobacter</taxon>
    </lineage>
</organism>
<reference key="1">
    <citation type="journal article" date="2009" name="J. Bacteriol.">
        <title>Genome sequence of Azotobacter vinelandii, an obligate aerobe specialized to support diverse anaerobic metabolic processes.</title>
        <authorList>
            <person name="Setubal J.C."/>
            <person name="Dos Santos P."/>
            <person name="Goldman B.S."/>
            <person name="Ertesvaag H."/>
            <person name="Espin G."/>
            <person name="Rubio L.M."/>
            <person name="Valla S."/>
            <person name="Almeida N.F."/>
            <person name="Balasubramanian D."/>
            <person name="Cromes L."/>
            <person name="Curatti L."/>
            <person name="Du Z."/>
            <person name="Godsy E."/>
            <person name="Goodner B."/>
            <person name="Hellner-Burris K."/>
            <person name="Hernandez J.A."/>
            <person name="Houmiel K."/>
            <person name="Imperial J."/>
            <person name="Kennedy C."/>
            <person name="Larson T.J."/>
            <person name="Latreille P."/>
            <person name="Ligon L.S."/>
            <person name="Lu J."/>
            <person name="Maerk M."/>
            <person name="Miller N.M."/>
            <person name="Norton S."/>
            <person name="O'Carroll I.P."/>
            <person name="Paulsen I."/>
            <person name="Raulfs E.C."/>
            <person name="Roemer R."/>
            <person name="Rosser J."/>
            <person name="Segura D."/>
            <person name="Slater S."/>
            <person name="Stricklin S.L."/>
            <person name="Studholme D.J."/>
            <person name="Sun J."/>
            <person name="Viana C.J."/>
            <person name="Wallin E."/>
            <person name="Wang B."/>
            <person name="Wheeler C."/>
            <person name="Zhu H."/>
            <person name="Dean D.R."/>
            <person name="Dixon R."/>
            <person name="Wood D."/>
        </authorList>
    </citation>
    <scope>NUCLEOTIDE SEQUENCE [LARGE SCALE GENOMIC DNA]</scope>
    <source>
        <strain>DJ / ATCC BAA-1303</strain>
    </source>
</reference>
<accession>C1DRI9</accession>
<comment type="catalytic activity">
    <reaction evidence="1">
        <text>acetaldehyde + NAD(+) + CoA = acetyl-CoA + NADH + H(+)</text>
        <dbReference type="Rhea" id="RHEA:23288"/>
        <dbReference type="ChEBI" id="CHEBI:15343"/>
        <dbReference type="ChEBI" id="CHEBI:15378"/>
        <dbReference type="ChEBI" id="CHEBI:57287"/>
        <dbReference type="ChEBI" id="CHEBI:57288"/>
        <dbReference type="ChEBI" id="CHEBI:57540"/>
        <dbReference type="ChEBI" id="CHEBI:57945"/>
        <dbReference type="EC" id="1.2.1.10"/>
    </reaction>
</comment>
<comment type="similarity">
    <text evidence="1">Belongs to the acetaldehyde dehydrogenase family.</text>
</comment>